<proteinExistence type="evidence at protein level"/>
<name>OP10_MAIZE</name>
<dbReference type="EMBL" id="AC204586">
    <property type="status" value="NOT_ANNOTATED_CDS"/>
    <property type="molecule type" value="Genomic_DNA"/>
</dbReference>
<dbReference type="RefSeq" id="XP_008665265.1">
    <property type="nucleotide sequence ID" value="XM_008667043.1"/>
</dbReference>
<dbReference type="STRING" id="4577.P0DKL2"/>
<dbReference type="EnsemblPlants" id="Zm00001eb054280_T001">
    <molecule id="P0DKL2-1"/>
    <property type="protein sequence ID" value="Zm00001eb054280_P001"/>
    <property type="gene ID" value="Zm00001eb054280"/>
</dbReference>
<dbReference type="Gramene" id="Zm00001eb054280_T001">
    <molecule id="P0DKL2-1"/>
    <property type="protein sequence ID" value="Zm00001eb054280_P001"/>
    <property type="gene ID" value="Zm00001eb054280"/>
</dbReference>
<dbReference type="eggNOG" id="ENOG502R1IX">
    <property type="taxonomic scope" value="Eukaryota"/>
</dbReference>
<dbReference type="InParanoid" id="P0DKL2"/>
<dbReference type="Proteomes" id="UP000007305">
    <property type="component" value="Chromosome 1"/>
</dbReference>
<dbReference type="ExpressionAtlas" id="P0DKL2">
    <property type="expression patterns" value="baseline and differential"/>
</dbReference>
<dbReference type="GO" id="GO:0005789">
    <property type="term" value="C:endoplasmic reticulum membrane"/>
    <property type="evidence" value="ECO:0007669"/>
    <property type="project" value="UniProtKB-SubCell"/>
</dbReference>
<dbReference type="GO" id="GO:0051015">
    <property type="term" value="F:actin filament binding"/>
    <property type="evidence" value="ECO:0000318"/>
    <property type="project" value="GO_Central"/>
</dbReference>
<dbReference type="GO" id="GO:0051764">
    <property type="term" value="P:actin crosslink formation"/>
    <property type="evidence" value="ECO:0000318"/>
    <property type="project" value="GO_Central"/>
</dbReference>
<dbReference type="CDD" id="cd00014">
    <property type="entry name" value="CH_SF"/>
    <property type="match status" value="1"/>
</dbReference>
<dbReference type="Gene3D" id="1.10.418.10">
    <property type="entry name" value="Calponin-like domain"/>
    <property type="match status" value="1"/>
</dbReference>
<dbReference type="InterPro" id="IPR036872">
    <property type="entry name" value="CH_dom_sf"/>
</dbReference>
<dbReference type="PANTHER" id="PTHR46756:SF18">
    <property type="entry name" value="GAS2-LIKE PROTEIN PICKLED EGGS"/>
    <property type="match status" value="1"/>
</dbReference>
<dbReference type="PANTHER" id="PTHR46756">
    <property type="entry name" value="TRANSGELIN"/>
    <property type="match status" value="1"/>
</dbReference>
<dbReference type="SUPFAM" id="SSF47576">
    <property type="entry name" value="Calponin-homology domain, CH-domain"/>
    <property type="match status" value="1"/>
</dbReference>
<reference key="1">
    <citation type="journal article" date="2009" name="Science">
        <title>The B73 maize genome: complexity, diversity, and dynamics.</title>
        <authorList>
            <person name="Schnable P.S."/>
            <person name="Ware D."/>
            <person name="Fulton R.S."/>
            <person name="Stein J.C."/>
            <person name="Wei F."/>
            <person name="Pasternak S."/>
            <person name="Liang C."/>
            <person name="Zhang J."/>
            <person name="Fulton L."/>
            <person name="Graves T.A."/>
            <person name="Minx P."/>
            <person name="Reily A.D."/>
            <person name="Courtney L."/>
            <person name="Kruchowski S.S."/>
            <person name="Tomlinson C."/>
            <person name="Strong C."/>
            <person name="Delehaunty K."/>
            <person name="Fronick C."/>
            <person name="Courtney B."/>
            <person name="Rock S.M."/>
            <person name="Belter E."/>
            <person name="Du F."/>
            <person name="Kim K."/>
            <person name="Abbott R.M."/>
            <person name="Cotton M."/>
            <person name="Levy A."/>
            <person name="Marchetto P."/>
            <person name="Ochoa K."/>
            <person name="Jackson S.M."/>
            <person name="Gillam B."/>
            <person name="Chen W."/>
            <person name="Yan L."/>
            <person name="Higginbotham J."/>
            <person name="Cardenas M."/>
            <person name="Waligorski J."/>
            <person name="Applebaum E."/>
            <person name="Phelps L."/>
            <person name="Falcone J."/>
            <person name="Kanchi K."/>
            <person name="Thane T."/>
            <person name="Scimone A."/>
            <person name="Thane N."/>
            <person name="Henke J."/>
            <person name="Wang T."/>
            <person name="Ruppert J."/>
            <person name="Shah N."/>
            <person name="Rotter K."/>
            <person name="Hodges J."/>
            <person name="Ingenthron E."/>
            <person name="Cordes M."/>
            <person name="Kohlberg S."/>
            <person name="Sgro J."/>
            <person name="Delgado B."/>
            <person name="Mead K."/>
            <person name="Chinwalla A."/>
            <person name="Leonard S."/>
            <person name="Crouse K."/>
            <person name="Collura K."/>
            <person name="Kudrna D."/>
            <person name="Currie J."/>
            <person name="He R."/>
            <person name="Angelova A."/>
            <person name="Rajasekar S."/>
            <person name="Mueller T."/>
            <person name="Lomeli R."/>
            <person name="Scara G."/>
            <person name="Ko A."/>
            <person name="Delaney K."/>
            <person name="Wissotski M."/>
            <person name="Lopez G."/>
            <person name="Campos D."/>
            <person name="Braidotti M."/>
            <person name="Ashley E."/>
            <person name="Golser W."/>
            <person name="Kim H."/>
            <person name="Lee S."/>
            <person name="Lin J."/>
            <person name="Dujmic Z."/>
            <person name="Kim W."/>
            <person name="Talag J."/>
            <person name="Zuccolo A."/>
            <person name="Fan C."/>
            <person name="Sebastian A."/>
            <person name="Kramer M."/>
            <person name="Spiegel L."/>
            <person name="Nascimento L."/>
            <person name="Zutavern T."/>
            <person name="Miller B."/>
            <person name="Ambroise C."/>
            <person name="Muller S."/>
            <person name="Spooner W."/>
            <person name="Narechania A."/>
            <person name="Ren L."/>
            <person name="Wei S."/>
            <person name="Kumari S."/>
            <person name="Faga B."/>
            <person name="Levy M.J."/>
            <person name="McMahan L."/>
            <person name="Van Buren P."/>
            <person name="Vaughn M.W."/>
            <person name="Ying K."/>
            <person name="Yeh C.-T."/>
            <person name="Emrich S.J."/>
            <person name="Jia Y."/>
            <person name="Kalyanaraman A."/>
            <person name="Hsia A.-P."/>
            <person name="Barbazuk W.B."/>
            <person name="Baucom R.S."/>
            <person name="Brutnell T.P."/>
            <person name="Carpita N.C."/>
            <person name="Chaparro C."/>
            <person name="Chia J.-M."/>
            <person name="Deragon J.-M."/>
            <person name="Estill J.C."/>
            <person name="Fu Y."/>
            <person name="Jeddeloh J.A."/>
            <person name="Han Y."/>
            <person name="Lee H."/>
            <person name="Li P."/>
            <person name="Lisch D.R."/>
            <person name="Liu S."/>
            <person name="Liu Z."/>
            <person name="Nagel D.H."/>
            <person name="McCann M.C."/>
            <person name="SanMiguel P."/>
            <person name="Myers A.M."/>
            <person name="Nettleton D."/>
            <person name="Nguyen J."/>
            <person name="Penning B.W."/>
            <person name="Ponnala L."/>
            <person name="Schneider K.L."/>
            <person name="Schwartz D.C."/>
            <person name="Sharma A."/>
            <person name="Soderlund C."/>
            <person name="Springer N.M."/>
            <person name="Sun Q."/>
            <person name="Wang H."/>
            <person name="Waterman M."/>
            <person name="Westerman R."/>
            <person name="Wolfgruber T.K."/>
            <person name="Yang L."/>
            <person name="Yu Y."/>
            <person name="Zhang L."/>
            <person name="Zhou S."/>
            <person name="Zhu Q."/>
            <person name="Bennetzen J.L."/>
            <person name="Dawe R.K."/>
            <person name="Jiang J."/>
            <person name="Jiang N."/>
            <person name="Presting G.G."/>
            <person name="Wessler S.R."/>
            <person name="Aluru S."/>
            <person name="Martienssen R.A."/>
            <person name="Clifton S.W."/>
            <person name="McCombie W.R."/>
            <person name="Wing R.A."/>
            <person name="Wilson R.K."/>
        </authorList>
    </citation>
    <scope>NUCLEOTIDE SEQUENCE [LARGE SCALE GENOMIC DNA]</scope>
    <source>
        <strain>cv. B73</strain>
    </source>
</reference>
<reference key="2">
    <citation type="journal article" date="2016" name="PLoS Genet.">
        <title>Maize opaque10 encodes a cereal-specific protein that is essential for the proper distribution of zeins in endosperm protein bodies.</title>
        <authorList>
            <person name="Yao D."/>
            <person name="Qi W."/>
            <person name="Li X."/>
            <person name="Yang Q."/>
            <person name="Yan S."/>
            <person name="Ling H."/>
            <person name="Wang G."/>
            <person name="Wang G."/>
            <person name="Song R."/>
        </authorList>
    </citation>
    <scope>FUNCTION</scope>
    <scope>TISSUE SPECIFICITY</scope>
    <scope>DEVELOPMENTAL STAGE</scope>
    <scope>SUBUNIT</scope>
    <scope>DOMAIN</scope>
    <scope>SUBCELLULAR LOCATION</scope>
    <scope>INTERACTION WITH ZEINS; FL1 AND HIP</scope>
</reference>
<keyword id="KW-0025">Alternative splicing</keyword>
<keyword id="KW-0256">Endoplasmic reticulum</keyword>
<keyword id="KW-0472">Membrane</keyword>
<keyword id="KW-1185">Reference proteome</keyword>
<keyword id="KW-0677">Repeat</keyword>
<keyword id="KW-0812">Transmembrane</keyword>
<keyword id="KW-1133">Transmembrane helix</keyword>
<comment type="function">
    <text evidence="3">Cereal endosperm protein required for the ring-shaped distribution of 22 kDa alpha- and 16 kDa gamma-zeins in protein bodies.</text>
</comment>
<comment type="subunit">
    <text evidence="3">Homodimer (PubMed:27541862). Interacts (via N-terminus) with FL1 (via C-terminus), HIP, 19 kDa alpha-zein (AC P06677), 22 kDa alpha-zein (AC O48966), 16 kDa gamma-zein (AC P08031) and 50 kDa gamma-zein (AC C0P381) (PubMed:27541862).</text>
</comment>
<comment type="subcellular location">
    <subcellularLocation>
        <location evidence="3">Endoplasmic reticulum membrane</location>
        <topology evidence="1">Single-pass membrane protein</topology>
    </subcellularLocation>
    <text evidence="3">In endosperm, predominantly deposited into protein bodies, at the interface between the alpha-zein-rich region and the gamma-zein-rich region.</text>
</comment>
<comment type="alternative products">
    <event type="alternative splicing"/>
    <isoform>
        <id>P0DKL2-1</id>
        <name>1</name>
        <sequence type="displayed"/>
    </isoform>
    <isoform>
        <id>P0DKL2-2</id>
        <name>2</name>
        <sequence type="described" ref="VSP_058623"/>
    </isoform>
    <isoform>
        <id>P0DKL2-3</id>
        <name>3</name>
        <sequence type="described" ref="VSP_058623 VSP_058624"/>
    </isoform>
    <isoform>
        <id>P0DKL2-4</id>
        <name>4</name>
        <sequence type="described" ref="VSP_058621 VSP_058622"/>
    </isoform>
</comment>
<comment type="tissue specificity">
    <text evidence="3">Expressed in kernels.</text>
</comment>
<comment type="developmental stage">
    <text evidence="3">Expressed continuously during kernel development.</text>
</comment>
<comment type="domain">
    <text evidence="3">The seven repeat domain is responsible for dimerization.</text>
</comment>
<evidence type="ECO:0000255" key="1"/>
<evidence type="ECO:0000256" key="2">
    <source>
        <dbReference type="SAM" id="MobiDB-lite"/>
    </source>
</evidence>
<evidence type="ECO:0000269" key="3">
    <source>
    </source>
</evidence>
<evidence type="ECO:0000303" key="4">
    <source>
    </source>
</evidence>
<evidence type="ECO:0000305" key="5"/>
<gene>
    <name evidence="4" type="primary">O10</name>
    <name evidence="5" type="ORF">GRMZM2G346263</name>
    <name type="ORF">Zm.12817</name>
</gene>
<feature type="chain" id="PRO_0000438208" description="Protein OPAQUE10">
    <location>
        <begin position="1"/>
        <end position="1059"/>
    </location>
</feature>
<feature type="transmembrane region" description="Helical" evidence="1">
    <location>
        <begin position="1003"/>
        <end position="1023"/>
    </location>
</feature>
<feature type="repeat" description="1" evidence="5">
    <location>
        <begin position="269"/>
        <end position="342"/>
    </location>
</feature>
<feature type="repeat" description="2" evidence="5">
    <location>
        <begin position="343"/>
        <end position="416"/>
    </location>
</feature>
<feature type="repeat" description="3" evidence="5">
    <location>
        <begin position="417"/>
        <end position="490"/>
    </location>
</feature>
<feature type="repeat" description="4" evidence="5">
    <location>
        <begin position="491"/>
        <end position="564"/>
    </location>
</feature>
<feature type="repeat" description="5" evidence="5">
    <location>
        <begin position="565"/>
        <end position="638"/>
    </location>
</feature>
<feature type="repeat" description="6" evidence="5">
    <location>
        <begin position="639"/>
        <end position="712"/>
    </location>
</feature>
<feature type="repeat" description="7" evidence="5">
    <location>
        <begin position="713"/>
        <end position="786"/>
    </location>
</feature>
<feature type="region of interest" description="7 X approximate repeats" evidence="5">
    <location>
        <begin position="269"/>
        <end position="786"/>
    </location>
</feature>
<feature type="region of interest" description="Disordered" evidence="2">
    <location>
        <begin position="511"/>
        <end position="534"/>
    </location>
</feature>
<feature type="region of interest" description="Disordered" evidence="2">
    <location>
        <begin position="732"/>
        <end position="756"/>
    </location>
</feature>
<feature type="region of interest" description="Disordered" evidence="2">
    <location>
        <begin position="856"/>
        <end position="875"/>
    </location>
</feature>
<feature type="region of interest" description="Disordered" evidence="2">
    <location>
        <begin position="889"/>
        <end position="998"/>
    </location>
</feature>
<feature type="compositionally biased region" description="Basic and acidic residues" evidence="2">
    <location>
        <begin position="515"/>
        <end position="534"/>
    </location>
</feature>
<feature type="compositionally biased region" description="Basic and acidic residues" evidence="2">
    <location>
        <begin position="858"/>
        <end position="869"/>
    </location>
</feature>
<feature type="compositionally biased region" description="Polar residues" evidence="2">
    <location>
        <begin position="907"/>
        <end position="924"/>
    </location>
</feature>
<feature type="compositionally biased region" description="Polar residues" evidence="2">
    <location>
        <begin position="945"/>
        <end position="958"/>
    </location>
</feature>
<feature type="compositionally biased region" description="Basic and acidic residues" evidence="2">
    <location>
        <begin position="984"/>
        <end position="994"/>
    </location>
</feature>
<feature type="splice variant" id="VSP_058621" description="In isoform 4.">
    <original>ICQILGLAGIDLFTPSD</original>
    <variation>VWIFAHFPSRRFGSINI</variation>
    <location>
        <begin position="151"/>
        <end position="167"/>
    </location>
</feature>
<feature type="splice variant" id="VSP_058622" description="In isoform 4.">
    <location>
        <begin position="168"/>
        <end position="1059"/>
    </location>
</feature>
<feature type="splice variant" id="VSP_058623" description="In isoform 2 and isoform 3.">
    <location>
        <begin position="294"/>
        <end position="513"/>
    </location>
</feature>
<feature type="splice variant" id="VSP_058624" description="In isoform 3.">
    <original>SAALLQKKQGGKLCDGHTISFGKICSEQRKGQEHGQRKRP</original>
    <variation>RRSKGGSFATVIPSLSGKSARSNARARNMGRENVPDAYPGGRLKA</variation>
    <location>
        <begin position="1020"/>
        <end position="1059"/>
    </location>
</feature>
<sequence length="1059" mass="114580">MSLHAARGGPHEDLSWSAIGRRAPRDVVTFGDREGGGGMRSAQQGPGAVRVDEASSASTFRELDEAFLQTQTKIWLGEVLHLRFGEDALVADLLADGELLFQVSKVLWKMLLKNNREQLKQSKVYIYERLSFGRSSGKYMPYSKVDSFLKICQILGLAGIDLFTPSDVVEKRNVRKVCICIRSVSKKSLILHLNVPDFDVVTYTISMPNYVVGGIRRNLEQTQYSSSSSSGYSPCARSKVLQQQIIFGGQNDQHEDTHYDSDEAESKLSLLEPEDSVNEDNFAAVLSQFNDAHNKGSEGYGESGCGKHGEKSLAESVGSLNIGIIDFEFMDSTPLIHDKESCSLLEPEDSVNEDNFAAVLSKFNDAPNKESKGYGESGRGKHGEKSLAESVGSLNIGIVDSEFMDSSPLIHDKESCSPLEPEGSVNEDNFTAVLSQFNDAPNKESEGYGESGCGKHGEKSLVESVGSLNIGIVDSEFMDSSPLIHDKESCSPLEPEDSVNEDNFAAVLSQFNDAPNKESEGYGESGRGKHGEKSLAESVGSLNIGIIDSEFMDSSPLIHDKESCFPLEPEGSVNEDNFTAVLSQFNDAPNKESEGYGESGCGKHGEKSLVESVGSLNIGIVDSEFMDSSPLIHDKESCSPLEPEDSVNEDNFTAVLSQFNDAPNKESEAYGESGCGKHGENSLDESVGSLNIGVIDSEFMDSSPLIHDKESCSPLEPEDSVNEDNFAAVLSQYSDGPNEGNEGYGESGHYKHEEKSLDESVGSLTIGIIDSEFMDSSRPIHDKESCSTGSAADQCSRTIPAKYELSSEESDSTGSHLVFDSGKNYLELNNHSVTDLERIYNGHATSVDQYVRGNGETLADHPKKEEAGLQKDTGTIAQHRDTLACDGESVCSSCEEPRRGLNGEPSDFSSESHSRLTPTHNTGGKLSMVSEHPVHNMESDMTGMASDSTNPELNPEASTRNEMDGSRSTDNPVEPENVAQDSATRGRPEGDAPRSGKGVLRSVAGGITLVGAVFFMFHLSAALLQKKQGGKLCDGHTISFGKICSEQRKGQEHGQRKRP</sequence>
<protein>
    <recommendedName>
        <fullName evidence="4">Protein OPAQUE10</fullName>
    </recommendedName>
</protein>
<accession>P0DKL2</accession>
<accession>A0A096TBT9</accession>
<accession>A0A096TBU0</accession>
<accession>A0A096TBU1</accession>
<organism>
    <name type="scientific">Zea mays</name>
    <name type="common">Maize</name>
    <dbReference type="NCBI Taxonomy" id="4577"/>
    <lineage>
        <taxon>Eukaryota</taxon>
        <taxon>Viridiplantae</taxon>
        <taxon>Streptophyta</taxon>
        <taxon>Embryophyta</taxon>
        <taxon>Tracheophyta</taxon>
        <taxon>Spermatophyta</taxon>
        <taxon>Magnoliopsida</taxon>
        <taxon>Liliopsida</taxon>
        <taxon>Poales</taxon>
        <taxon>Poaceae</taxon>
        <taxon>PACMAD clade</taxon>
        <taxon>Panicoideae</taxon>
        <taxon>Andropogonodae</taxon>
        <taxon>Andropogoneae</taxon>
        <taxon>Tripsacinae</taxon>
        <taxon>Zea</taxon>
    </lineage>
</organism>